<comment type="function">
    <text evidence="1">This is one of the proteins that bind and probably mediate the attachment of the 5S RNA into the large ribosomal subunit, where it forms part of the central protuberance.</text>
</comment>
<comment type="subunit">
    <text evidence="1">Part of the 50S ribosomal subunit; part of the 5S rRNA/L5/L18/L25 subcomplex. Contacts the 5S and 23S rRNAs.</text>
</comment>
<comment type="similarity">
    <text evidence="1">Belongs to the universal ribosomal protein uL18 family.</text>
</comment>
<protein>
    <recommendedName>
        <fullName evidence="1">Large ribosomal subunit protein uL18</fullName>
    </recommendedName>
    <alternativeName>
        <fullName evidence="3">50S ribosomal protein L18</fullName>
    </alternativeName>
</protein>
<proteinExistence type="inferred from homology"/>
<gene>
    <name evidence="1" type="primary">rplR</name>
    <name type="ordered locus">spyM18_0068</name>
</gene>
<organism>
    <name type="scientific">Streptococcus pyogenes serotype M18 (strain MGAS8232)</name>
    <dbReference type="NCBI Taxonomy" id="186103"/>
    <lineage>
        <taxon>Bacteria</taxon>
        <taxon>Bacillati</taxon>
        <taxon>Bacillota</taxon>
        <taxon>Bacilli</taxon>
        <taxon>Lactobacillales</taxon>
        <taxon>Streptococcaceae</taxon>
        <taxon>Streptococcus</taxon>
    </lineage>
</organism>
<dbReference type="EMBL" id="AE009949">
    <property type="protein sequence ID" value="AAL96892.1"/>
    <property type="molecule type" value="Genomic_DNA"/>
</dbReference>
<dbReference type="RefSeq" id="WP_002987751.1">
    <property type="nucleotide sequence ID" value="NC_003485.1"/>
</dbReference>
<dbReference type="SMR" id="Q7CNP3"/>
<dbReference type="GeneID" id="69900042"/>
<dbReference type="KEGG" id="spm:spyM18_0068"/>
<dbReference type="HOGENOM" id="CLU_098841_0_1_9"/>
<dbReference type="GO" id="GO:0022625">
    <property type="term" value="C:cytosolic large ribosomal subunit"/>
    <property type="evidence" value="ECO:0007669"/>
    <property type="project" value="TreeGrafter"/>
</dbReference>
<dbReference type="GO" id="GO:0008097">
    <property type="term" value="F:5S rRNA binding"/>
    <property type="evidence" value="ECO:0007669"/>
    <property type="project" value="TreeGrafter"/>
</dbReference>
<dbReference type="GO" id="GO:0003735">
    <property type="term" value="F:structural constituent of ribosome"/>
    <property type="evidence" value="ECO:0007669"/>
    <property type="project" value="InterPro"/>
</dbReference>
<dbReference type="GO" id="GO:0006412">
    <property type="term" value="P:translation"/>
    <property type="evidence" value="ECO:0007669"/>
    <property type="project" value="UniProtKB-UniRule"/>
</dbReference>
<dbReference type="CDD" id="cd00432">
    <property type="entry name" value="Ribosomal_L18_L5e"/>
    <property type="match status" value="1"/>
</dbReference>
<dbReference type="FunFam" id="3.30.420.100:FF:000001">
    <property type="entry name" value="50S ribosomal protein L18"/>
    <property type="match status" value="1"/>
</dbReference>
<dbReference type="Gene3D" id="3.30.420.100">
    <property type="match status" value="1"/>
</dbReference>
<dbReference type="HAMAP" id="MF_01337_B">
    <property type="entry name" value="Ribosomal_uL18_B"/>
    <property type="match status" value="1"/>
</dbReference>
<dbReference type="InterPro" id="IPR004389">
    <property type="entry name" value="Ribosomal_uL18_bac-type"/>
</dbReference>
<dbReference type="InterPro" id="IPR005484">
    <property type="entry name" value="Ribosomal_uL18_bac/euk"/>
</dbReference>
<dbReference type="NCBIfam" id="TIGR00060">
    <property type="entry name" value="L18_bact"/>
    <property type="match status" value="1"/>
</dbReference>
<dbReference type="PANTHER" id="PTHR12899">
    <property type="entry name" value="39S RIBOSOMAL PROTEIN L18, MITOCHONDRIAL"/>
    <property type="match status" value="1"/>
</dbReference>
<dbReference type="PANTHER" id="PTHR12899:SF3">
    <property type="entry name" value="LARGE RIBOSOMAL SUBUNIT PROTEIN UL18M"/>
    <property type="match status" value="1"/>
</dbReference>
<dbReference type="Pfam" id="PF00861">
    <property type="entry name" value="Ribosomal_L18p"/>
    <property type="match status" value="1"/>
</dbReference>
<dbReference type="SUPFAM" id="SSF53137">
    <property type="entry name" value="Translational machinery components"/>
    <property type="match status" value="1"/>
</dbReference>
<sequence length="118" mass="12866">MISKPDKNKIRQKRHRRVRGKLSGTADRPRLNVFRSNTGIYAQVIDDVAGVTLASASTLDKDVSKGTKTEQAVVVGKLVAERAVAKGISEVVFDRGGYLYHGRVKALADAARENGLKF</sequence>
<evidence type="ECO:0000255" key="1">
    <source>
        <dbReference type="HAMAP-Rule" id="MF_01337"/>
    </source>
</evidence>
<evidence type="ECO:0000256" key="2">
    <source>
        <dbReference type="SAM" id="MobiDB-lite"/>
    </source>
</evidence>
<evidence type="ECO:0000305" key="3"/>
<reference key="1">
    <citation type="journal article" date="2002" name="Proc. Natl. Acad. Sci. U.S.A.">
        <title>Genome sequence and comparative microarray analysis of serotype M18 group A Streptococcus strains associated with acute rheumatic fever outbreaks.</title>
        <authorList>
            <person name="Smoot J.C."/>
            <person name="Barbian K.D."/>
            <person name="Van Gompel J.J."/>
            <person name="Smoot L.M."/>
            <person name="Chaussee M.S."/>
            <person name="Sylva G.L."/>
            <person name="Sturdevant D.E."/>
            <person name="Ricklefs S.M."/>
            <person name="Porcella S.F."/>
            <person name="Parkins L.D."/>
            <person name="Beres S.B."/>
            <person name="Campbell D.S."/>
            <person name="Smith T.M."/>
            <person name="Zhang Q."/>
            <person name="Kapur V."/>
            <person name="Daly J.A."/>
            <person name="Veasy L.G."/>
            <person name="Musser J.M."/>
        </authorList>
    </citation>
    <scope>NUCLEOTIDE SEQUENCE [LARGE SCALE GENOMIC DNA]</scope>
    <source>
        <strain>MGAS8232</strain>
    </source>
</reference>
<accession>Q7CNP3</accession>
<feature type="chain" id="PRO_0000131362" description="Large ribosomal subunit protein uL18">
    <location>
        <begin position="1"/>
        <end position="118"/>
    </location>
</feature>
<feature type="region of interest" description="Disordered" evidence="2">
    <location>
        <begin position="1"/>
        <end position="25"/>
    </location>
</feature>
<feature type="compositionally biased region" description="Basic residues" evidence="2">
    <location>
        <begin position="10"/>
        <end position="20"/>
    </location>
</feature>
<name>RL18_STRP8</name>
<keyword id="KW-0687">Ribonucleoprotein</keyword>
<keyword id="KW-0689">Ribosomal protein</keyword>
<keyword id="KW-0694">RNA-binding</keyword>
<keyword id="KW-0699">rRNA-binding</keyword>